<dbReference type="EC" id="2.4.1.255" evidence="2"/>
<dbReference type="EMBL" id="AF035820">
    <property type="protein sequence ID" value="AAC36055.1"/>
    <property type="molecule type" value="mRNA"/>
</dbReference>
<dbReference type="SMR" id="O82422"/>
<dbReference type="CAZy" id="GT41">
    <property type="family name" value="Glycosyltransferase Family 41"/>
</dbReference>
<dbReference type="UniPathway" id="UPA00378"/>
<dbReference type="ExpressionAtlas" id="O82422">
    <property type="expression patterns" value="baseline and differential"/>
</dbReference>
<dbReference type="GO" id="GO:0005634">
    <property type="term" value="C:nucleus"/>
    <property type="evidence" value="ECO:0007669"/>
    <property type="project" value="UniProtKB-SubCell"/>
</dbReference>
<dbReference type="GO" id="GO:0097363">
    <property type="term" value="F:protein O-acetylglucosaminyltransferase activity"/>
    <property type="evidence" value="ECO:0007669"/>
    <property type="project" value="UniProtKB-EC"/>
</dbReference>
<dbReference type="GO" id="GO:0009740">
    <property type="term" value="P:gibberellic acid mediated signaling pathway"/>
    <property type="evidence" value="ECO:0007669"/>
    <property type="project" value="UniProtKB-KW"/>
</dbReference>
<dbReference type="GO" id="GO:0006486">
    <property type="term" value="P:protein glycosylation"/>
    <property type="evidence" value="ECO:0007669"/>
    <property type="project" value="UniProtKB-UniPathway"/>
</dbReference>
<dbReference type="Gene3D" id="3.40.50.11380">
    <property type="match status" value="1"/>
</dbReference>
<dbReference type="Gene3D" id="3.40.50.2000">
    <property type="entry name" value="Glycogen Phosphorylase B"/>
    <property type="match status" value="1"/>
</dbReference>
<dbReference type="Gene3D" id="1.25.40.10">
    <property type="entry name" value="Tetratricopeptide repeat domain"/>
    <property type="match status" value="4"/>
</dbReference>
<dbReference type="InterPro" id="IPR051939">
    <property type="entry name" value="Glycosyltr_41/O-GlcNAc_trsf"/>
</dbReference>
<dbReference type="InterPro" id="IPR029489">
    <property type="entry name" value="OGT/SEC/SPY_C"/>
</dbReference>
<dbReference type="InterPro" id="IPR006597">
    <property type="entry name" value="Sel1-like"/>
</dbReference>
<dbReference type="InterPro" id="IPR011990">
    <property type="entry name" value="TPR-like_helical_dom_sf"/>
</dbReference>
<dbReference type="InterPro" id="IPR019734">
    <property type="entry name" value="TPR_rpt"/>
</dbReference>
<dbReference type="PANTHER" id="PTHR44835:SF1">
    <property type="entry name" value="PROTEIN O-GLCNAC TRANSFERASE"/>
    <property type="match status" value="1"/>
</dbReference>
<dbReference type="PANTHER" id="PTHR44835">
    <property type="entry name" value="UDP-N-ACETYLGLUCOSAMINE--PEPTIDE N-ACETYLGLUCOSAMINYLTRANSFERASE SPINDLY-RELATED"/>
    <property type="match status" value="1"/>
</dbReference>
<dbReference type="Pfam" id="PF13844">
    <property type="entry name" value="Glyco_transf_41"/>
    <property type="match status" value="2"/>
</dbReference>
<dbReference type="Pfam" id="PF00515">
    <property type="entry name" value="TPR_1"/>
    <property type="match status" value="3"/>
</dbReference>
<dbReference type="Pfam" id="PF13432">
    <property type="entry name" value="TPR_16"/>
    <property type="match status" value="2"/>
</dbReference>
<dbReference type="Pfam" id="PF13181">
    <property type="entry name" value="TPR_8"/>
    <property type="match status" value="1"/>
</dbReference>
<dbReference type="SMART" id="SM00671">
    <property type="entry name" value="SEL1"/>
    <property type="match status" value="3"/>
</dbReference>
<dbReference type="SMART" id="SM00028">
    <property type="entry name" value="TPR"/>
    <property type="match status" value="11"/>
</dbReference>
<dbReference type="SUPFAM" id="SSF48452">
    <property type="entry name" value="TPR-like"/>
    <property type="match status" value="3"/>
</dbReference>
<dbReference type="PROSITE" id="PS50005">
    <property type="entry name" value="TPR"/>
    <property type="match status" value="10"/>
</dbReference>
<dbReference type="PROSITE" id="PS50293">
    <property type="entry name" value="TPR_REGION"/>
    <property type="match status" value="1"/>
</dbReference>
<feature type="chain" id="PRO_0000191778" description="Probable UDP-N-acetylglucosamine--peptide N-acetylglucosaminyltransferase SPINDLY">
    <location>
        <begin position="1"/>
        <end position="944"/>
    </location>
</feature>
<feature type="repeat" description="TPR 1">
    <location>
        <begin position="34"/>
        <end position="67"/>
    </location>
</feature>
<feature type="repeat" description="TPR 2">
    <location>
        <begin position="68"/>
        <end position="101"/>
    </location>
</feature>
<feature type="repeat" description="TPR 3">
    <location>
        <begin position="102"/>
        <end position="135"/>
    </location>
</feature>
<feature type="repeat" description="TPR 4">
    <location>
        <begin position="143"/>
        <end position="176"/>
    </location>
</feature>
<feature type="repeat" description="TPR 5">
    <location>
        <begin position="177"/>
        <end position="210"/>
    </location>
</feature>
<feature type="repeat" description="TPR 6">
    <location>
        <begin position="211"/>
        <end position="244"/>
    </location>
</feature>
<feature type="repeat" description="TPR 7">
    <location>
        <begin position="252"/>
        <end position="285"/>
    </location>
</feature>
<feature type="repeat" description="TPR 8">
    <location>
        <begin position="286"/>
        <end position="319"/>
    </location>
</feature>
<feature type="repeat" description="TPR 9">
    <location>
        <begin position="320"/>
        <end position="353"/>
    </location>
</feature>
<feature type="repeat" description="TPR 10">
    <location>
        <begin position="355"/>
        <end position="387"/>
    </location>
</feature>
<feature type="repeat" description="TPR 11">
    <location>
        <begin position="388"/>
        <end position="421"/>
    </location>
</feature>
<feature type="region of interest" description="Catalytic region">
    <location>
        <begin position="422"/>
        <end position="944"/>
    </location>
</feature>
<feature type="region of interest" description="Disordered" evidence="3">
    <location>
        <begin position="873"/>
        <end position="944"/>
    </location>
</feature>
<feature type="compositionally biased region" description="Polar residues" evidence="3">
    <location>
        <begin position="897"/>
        <end position="911"/>
    </location>
</feature>
<gene>
    <name type="primary">SPY</name>
</gene>
<comment type="function">
    <text evidence="4">Probable O-linked N-acetylglucosamine transferase (OGT) involved in various processes such as gibberellin (GA) signaling pathway. OGTs catalyze the addition of nucleotide-activated sugars directly onto the polypeptide through O-glycosidic linkage with the hydroxyl of serine or threonine. Probably acts by adding O-linked sugars to yet unknown proteins.</text>
</comment>
<comment type="catalytic activity">
    <reaction evidence="2">
        <text>L-seryl-[protein] + UDP-N-acetyl-alpha-D-glucosamine = 3-O-(N-acetyl-beta-D-glucosaminyl)-L-seryl-[protein] + UDP + H(+)</text>
        <dbReference type="Rhea" id="RHEA:48904"/>
        <dbReference type="Rhea" id="RHEA-COMP:9863"/>
        <dbReference type="Rhea" id="RHEA-COMP:12251"/>
        <dbReference type="ChEBI" id="CHEBI:15378"/>
        <dbReference type="ChEBI" id="CHEBI:29999"/>
        <dbReference type="ChEBI" id="CHEBI:57705"/>
        <dbReference type="ChEBI" id="CHEBI:58223"/>
        <dbReference type="ChEBI" id="CHEBI:90838"/>
        <dbReference type="EC" id="2.4.1.255"/>
    </reaction>
</comment>
<comment type="catalytic activity">
    <reaction evidence="2">
        <text>L-threonyl-[protein] + UDP-N-acetyl-alpha-D-glucosamine = 3-O-(N-acetyl-beta-D-glucosaminyl)-L-threonyl-[protein] + UDP + H(+)</text>
        <dbReference type="Rhea" id="RHEA:48908"/>
        <dbReference type="Rhea" id="RHEA-COMP:11060"/>
        <dbReference type="Rhea" id="RHEA-COMP:12252"/>
        <dbReference type="ChEBI" id="CHEBI:15378"/>
        <dbReference type="ChEBI" id="CHEBI:30013"/>
        <dbReference type="ChEBI" id="CHEBI:57705"/>
        <dbReference type="ChEBI" id="CHEBI:58223"/>
        <dbReference type="ChEBI" id="CHEBI:90840"/>
        <dbReference type="EC" id="2.4.1.255"/>
    </reaction>
</comment>
<comment type="pathway">
    <text>Protein modification; protein glycosylation.</text>
</comment>
<comment type="subcellular location">
    <subcellularLocation>
        <location evidence="1">Nucleus</location>
    </subcellularLocation>
</comment>
<comment type="tissue specificity">
    <text evidence="4">Expressed in all parts of plants, including immature leaf blade, leaf sheath, mature leaf blade, roots, germinating embryos and aleurone layers.</text>
</comment>
<comment type="similarity">
    <text evidence="5">Belongs to the glycosyltransferase 41 family. O-GlcNAc transferase subfamily.</text>
</comment>
<sequence>MESLQGKESNGAVPVCNGGGGAAAPPAKQQLPEGTDALRYANILRSRNKFADALQLYTTVLDKDGANVEALIGKGICLQAQSLPRQALDCFTEAVKVDPKNACALTHCGMIYKDEGHLVEAAEAYQKARSADPSYKAASEFLAIVLTDLGTSLKLAGNTEDGIQKYCEALEVDSHYAPAYYNLGVVYSEMMQFDVALTCYEKAALERPLYAEAYCNMGVIYKNRGELDAAIACYDRCLTISPNFEIAKNNMAIALTDLGTKVKIEGDINQGVAYYKKALFYNWHYADAMYNLGVAYGEMLNFEMAIVFYELALHFNPRCAEACNNLGVIYKDRDNLDKAVECYQMALSIKPNFSQSLNNLGVVYTVQGKMDAAASMIEKAILANPTYAEAYNNLGVLYRDAGSITLSVQAYERCLQIDPDSRNAGQNRLLAMNYIDEGSDDKLYDAHREWGKRFMKLYAQYTSWDNPKVADRPLVIGYVSPDFFTHSVSYFVEAPLTHHDYTKCKVVVYSGVVKADAKTLRFKDKVLKKGGVWRDIYGIDEKKVATLVREDKVDILVELTGHTANNKLGTMACRPAPIQVTWIGYPNTTGLPAIDYRITDSLADSPNTNQKHVEELVRLPESFLCYTPSPEAGPVCPTPAISNGFITFGSFNNLAKITPKVMQVWARILCAVPNSRLVVKCKPFCCDSIRQKFLSTLEELGLESLRVDLLPLIHLNHDHMQAYSLMDISLDTFPYAGTTTTCESLYMGVPCVTMAGSVHAHNVGVSLLTKVGLGRLVAKTEDEYVSLALDLASDVSALEELRKSLRELMIKSPVCDGESFTRGLESAYRSMWHRYCDGDSPALRRLEVLADQTGEDLNKTAVKLADLKAQRVNATAEEDNQSPVTKFDATSKGGEQPQPQIMVNGVTSPEGNQAVKAQPQIMVNGVSSPHSPSGRCEANGHSSR</sequence>
<proteinExistence type="evidence at transcript level"/>
<name>SPY_HORVU</name>
<protein>
    <recommendedName>
        <fullName>Probable UDP-N-acetylglucosamine--peptide N-acetylglucosaminyltransferase SPINDLY</fullName>
        <ecNumber evidence="2">2.4.1.255</ecNumber>
    </recommendedName>
    <alternativeName>
        <fullName>HvSPY</fullName>
    </alternativeName>
</protein>
<reference key="1">
    <citation type="journal article" date="1998" name="Plant Cell">
        <title>Identification of a negative regulator of gibberellin action, HvSPY, in barley.</title>
        <authorList>
            <person name="Robertson M."/>
            <person name="Swain S.M."/>
            <person name="Chandler P.M."/>
            <person name="Olszewski N.E."/>
        </authorList>
    </citation>
    <scope>NUCLEOTIDE SEQUENCE [MRNA]</scope>
    <scope>FUNCTION</scope>
    <scope>TISSUE SPECIFICITY</scope>
    <source>
        <strain>cv. Himalaya</strain>
    </source>
</reference>
<accession>O82422</accession>
<keyword id="KW-0939">Gibberellin signaling pathway</keyword>
<keyword id="KW-0328">Glycosyltransferase</keyword>
<keyword id="KW-0539">Nucleus</keyword>
<keyword id="KW-0677">Repeat</keyword>
<keyword id="KW-0802">TPR repeat</keyword>
<keyword id="KW-0808">Transferase</keyword>
<organism>
    <name type="scientific">Hordeum vulgare</name>
    <name type="common">Barley</name>
    <dbReference type="NCBI Taxonomy" id="4513"/>
    <lineage>
        <taxon>Eukaryota</taxon>
        <taxon>Viridiplantae</taxon>
        <taxon>Streptophyta</taxon>
        <taxon>Embryophyta</taxon>
        <taxon>Tracheophyta</taxon>
        <taxon>Spermatophyta</taxon>
        <taxon>Magnoliopsida</taxon>
        <taxon>Liliopsida</taxon>
        <taxon>Poales</taxon>
        <taxon>Poaceae</taxon>
        <taxon>BOP clade</taxon>
        <taxon>Pooideae</taxon>
        <taxon>Triticodae</taxon>
        <taxon>Triticeae</taxon>
        <taxon>Hordeinae</taxon>
        <taxon>Hordeum</taxon>
    </lineage>
</organism>
<evidence type="ECO:0000250" key="1"/>
<evidence type="ECO:0000250" key="2">
    <source>
        <dbReference type="UniProtKB" id="Q96301"/>
    </source>
</evidence>
<evidence type="ECO:0000256" key="3">
    <source>
        <dbReference type="SAM" id="MobiDB-lite"/>
    </source>
</evidence>
<evidence type="ECO:0000269" key="4">
    <source>
    </source>
</evidence>
<evidence type="ECO:0000305" key="5"/>